<organism>
    <name type="scientific">Nostoc sp. (strain PCC 7120 / SAG 25.82 / UTEX 2576)</name>
    <dbReference type="NCBI Taxonomy" id="103690"/>
    <lineage>
        <taxon>Bacteria</taxon>
        <taxon>Bacillati</taxon>
        <taxon>Cyanobacteriota</taxon>
        <taxon>Cyanophyceae</taxon>
        <taxon>Nostocales</taxon>
        <taxon>Nostocaceae</taxon>
        <taxon>Nostoc</taxon>
    </lineage>
</organism>
<accession>Q8YRI6</accession>
<keyword id="KW-0648">Protein biosynthesis</keyword>
<keyword id="KW-1185">Reference proteome</keyword>
<keyword id="KW-0808">Transferase</keyword>
<sequence length="342" mass="37659">MKIVFFGTPEFAVPTLEKLLINPEFDVLAVITQPDKRRERGNKLTPSPVKNVAMSYSQWENIAHDLPVWQPERIKKDTETLNRLKELDVDAFVVVAYGQILPQKILNIPKLGSVNVHGSILPQYRGAAPIQWCLYNGETETGITTMLMDVGMDTGAMLLKATTPIGLLDNADDVAQKLSVIGGDLLIETLHKLQQKEIQPIPQDNAAATYASLIQKQDYGLDWSRSALQLHNQIRGFYPNCITTFRNQPLKITASFPLGAAYREELPPELQKMLQKLPDLSQISGSPGEVVSITKGVGAIAQTGEGLLLLREVQLPGKRPQSGWDFVNGTRLTVGEVLGNGS</sequence>
<name>FMT_NOSS1</name>
<feature type="chain" id="PRO_0000082907" description="Methionyl-tRNA formyltransferase">
    <location>
        <begin position="1"/>
        <end position="342"/>
    </location>
</feature>
<feature type="binding site" evidence="1">
    <location>
        <begin position="119"/>
        <end position="122"/>
    </location>
    <ligand>
        <name>(6S)-5,6,7,8-tetrahydrofolate</name>
        <dbReference type="ChEBI" id="CHEBI:57453"/>
    </ligand>
</feature>
<reference key="1">
    <citation type="journal article" date="2001" name="DNA Res.">
        <title>Complete genomic sequence of the filamentous nitrogen-fixing cyanobacterium Anabaena sp. strain PCC 7120.</title>
        <authorList>
            <person name="Kaneko T."/>
            <person name="Nakamura Y."/>
            <person name="Wolk C.P."/>
            <person name="Kuritz T."/>
            <person name="Sasamoto S."/>
            <person name="Watanabe A."/>
            <person name="Iriguchi M."/>
            <person name="Ishikawa A."/>
            <person name="Kawashima K."/>
            <person name="Kimura T."/>
            <person name="Kishida Y."/>
            <person name="Kohara M."/>
            <person name="Matsumoto M."/>
            <person name="Matsuno A."/>
            <person name="Muraki A."/>
            <person name="Nakazaki N."/>
            <person name="Shimpo S."/>
            <person name="Sugimoto M."/>
            <person name="Takazawa M."/>
            <person name="Yamada M."/>
            <person name="Yasuda M."/>
            <person name="Tabata S."/>
        </authorList>
    </citation>
    <scope>NUCLEOTIDE SEQUENCE [LARGE SCALE GENOMIC DNA]</scope>
    <source>
        <strain>PCC 7120 / SAG 25.82 / UTEX 2576</strain>
    </source>
</reference>
<protein>
    <recommendedName>
        <fullName evidence="1">Methionyl-tRNA formyltransferase</fullName>
        <ecNumber evidence="1">2.1.2.9</ecNumber>
    </recommendedName>
</protein>
<comment type="function">
    <text evidence="1">Attaches a formyl group to the free amino group of methionyl-tRNA(fMet). The formyl group appears to play a dual role in the initiator identity of N-formylmethionyl-tRNA by promoting its recognition by IF2 and preventing the misappropriation of this tRNA by the elongation apparatus.</text>
</comment>
<comment type="catalytic activity">
    <reaction evidence="1">
        <text>L-methionyl-tRNA(fMet) + (6R)-10-formyltetrahydrofolate = N-formyl-L-methionyl-tRNA(fMet) + (6S)-5,6,7,8-tetrahydrofolate + H(+)</text>
        <dbReference type="Rhea" id="RHEA:24380"/>
        <dbReference type="Rhea" id="RHEA-COMP:9952"/>
        <dbReference type="Rhea" id="RHEA-COMP:9953"/>
        <dbReference type="ChEBI" id="CHEBI:15378"/>
        <dbReference type="ChEBI" id="CHEBI:57453"/>
        <dbReference type="ChEBI" id="CHEBI:78530"/>
        <dbReference type="ChEBI" id="CHEBI:78844"/>
        <dbReference type="ChEBI" id="CHEBI:195366"/>
        <dbReference type="EC" id="2.1.2.9"/>
    </reaction>
</comment>
<comment type="similarity">
    <text evidence="1">Belongs to the Fmt family.</text>
</comment>
<gene>
    <name evidence="1" type="primary">fmt</name>
    <name type="ordered locus">alr3460</name>
</gene>
<dbReference type="EC" id="2.1.2.9" evidence="1"/>
<dbReference type="EMBL" id="BA000019">
    <property type="protein sequence ID" value="BAB75159.1"/>
    <property type="molecule type" value="Genomic_DNA"/>
</dbReference>
<dbReference type="PIR" id="AE2238">
    <property type="entry name" value="AE2238"/>
</dbReference>
<dbReference type="RefSeq" id="WP_010997610.1">
    <property type="nucleotide sequence ID" value="NZ_RSCN01000015.1"/>
</dbReference>
<dbReference type="SMR" id="Q8YRI6"/>
<dbReference type="STRING" id="103690.gene:10495499"/>
<dbReference type="KEGG" id="ana:alr3460"/>
<dbReference type="eggNOG" id="COG0223">
    <property type="taxonomic scope" value="Bacteria"/>
</dbReference>
<dbReference type="OrthoDB" id="9802815at2"/>
<dbReference type="Proteomes" id="UP000002483">
    <property type="component" value="Chromosome"/>
</dbReference>
<dbReference type="GO" id="GO:0005829">
    <property type="term" value="C:cytosol"/>
    <property type="evidence" value="ECO:0007669"/>
    <property type="project" value="TreeGrafter"/>
</dbReference>
<dbReference type="GO" id="GO:0004479">
    <property type="term" value="F:methionyl-tRNA formyltransferase activity"/>
    <property type="evidence" value="ECO:0007669"/>
    <property type="project" value="UniProtKB-UniRule"/>
</dbReference>
<dbReference type="CDD" id="cd08646">
    <property type="entry name" value="FMT_core_Met-tRNA-FMT_N"/>
    <property type="match status" value="1"/>
</dbReference>
<dbReference type="CDD" id="cd08704">
    <property type="entry name" value="Met_tRNA_FMT_C"/>
    <property type="match status" value="1"/>
</dbReference>
<dbReference type="Gene3D" id="3.10.25.10">
    <property type="entry name" value="Formyl transferase, C-terminal domain"/>
    <property type="match status" value="1"/>
</dbReference>
<dbReference type="Gene3D" id="3.40.50.170">
    <property type="entry name" value="Formyl transferase, N-terminal domain"/>
    <property type="match status" value="1"/>
</dbReference>
<dbReference type="HAMAP" id="MF_00182">
    <property type="entry name" value="Formyl_trans"/>
    <property type="match status" value="1"/>
</dbReference>
<dbReference type="InterPro" id="IPR005794">
    <property type="entry name" value="Fmt"/>
</dbReference>
<dbReference type="InterPro" id="IPR005793">
    <property type="entry name" value="Formyl_trans_C"/>
</dbReference>
<dbReference type="InterPro" id="IPR037022">
    <property type="entry name" value="Formyl_trans_C_sf"/>
</dbReference>
<dbReference type="InterPro" id="IPR002376">
    <property type="entry name" value="Formyl_transf_N"/>
</dbReference>
<dbReference type="InterPro" id="IPR036477">
    <property type="entry name" value="Formyl_transf_N_sf"/>
</dbReference>
<dbReference type="InterPro" id="IPR011034">
    <property type="entry name" value="Formyl_transferase-like_C_sf"/>
</dbReference>
<dbReference type="InterPro" id="IPR001555">
    <property type="entry name" value="GART_AS"/>
</dbReference>
<dbReference type="InterPro" id="IPR044135">
    <property type="entry name" value="Met-tRNA-FMT_C"/>
</dbReference>
<dbReference type="InterPro" id="IPR041711">
    <property type="entry name" value="Met-tRNA-FMT_N"/>
</dbReference>
<dbReference type="NCBIfam" id="TIGR00460">
    <property type="entry name" value="fmt"/>
    <property type="match status" value="1"/>
</dbReference>
<dbReference type="PANTHER" id="PTHR11138">
    <property type="entry name" value="METHIONYL-TRNA FORMYLTRANSFERASE"/>
    <property type="match status" value="1"/>
</dbReference>
<dbReference type="PANTHER" id="PTHR11138:SF5">
    <property type="entry name" value="METHIONYL-TRNA FORMYLTRANSFERASE, MITOCHONDRIAL"/>
    <property type="match status" value="1"/>
</dbReference>
<dbReference type="Pfam" id="PF02911">
    <property type="entry name" value="Formyl_trans_C"/>
    <property type="match status" value="1"/>
</dbReference>
<dbReference type="Pfam" id="PF00551">
    <property type="entry name" value="Formyl_trans_N"/>
    <property type="match status" value="1"/>
</dbReference>
<dbReference type="SUPFAM" id="SSF50486">
    <property type="entry name" value="FMT C-terminal domain-like"/>
    <property type="match status" value="1"/>
</dbReference>
<dbReference type="SUPFAM" id="SSF53328">
    <property type="entry name" value="Formyltransferase"/>
    <property type="match status" value="1"/>
</dbReference>
<dbReference type="PROSITE" id="PS00373">
    <property type="entry name" value="GART"/>
    <property type="match status" value="1"/>
</dbReference>
<proteinExistence type="inferred from homology"/>
<evidence type="ECO:0000255" key="1">
    <source>
        <dbReference type="HAMAP-Rule" id="MF_00182"/>
    </source>
</evidence>